<reference key="1">
    <citation type="journal article" date="1998" name="Nature">
        <title>Deciphering the biology of Mycobacterium tuberculosis from the complete genome sequence.</title>
        <authorList>
            <person name="Cole S.T."/>
            <person name="Brosch R."/>
            <person name="Parkhill J."/>
            <person name="Garnier T."/>
            <person name="Churcher C.M."/>
            <person name="Harris D.E."/>
            <person name="Gordon S.V."/>
            <person name="Eiglmeier K."/>
            <person name="Gas S."/>
            <person name="Barry C.E. III"/>
            <person name="Tekaia F."/>
            <person name="Badcock K."/>
            <person name="Basham D."/>
            <person name="Brown D."/>
            <person name="Chillingworth T."/>
            <person name="Connor R."/>
            <person name="Davies R.M."/>
            <person name="Devlin K."/>
            <person name="Feltwell T."/>
            <person name="Gentles S."/>
            <person name="Hamlin N."/>
            <person name="Holroyd S."/>
            <person name="Hornsby T."/>
            <person name="Jagels K."/>
            <person name="Krogh A."/>
            <person name="McLean J."/>
            <person name="Moule S."/>
            <person name="Murphy L.D."/>
            <person name="Oliver S."/>
            <person name="Osborne J."/>
            <person name="Quail M.A."/>
            <person name="Rajandream M.A."/>
            <person name="Rogers J."/>
            <person name="Rutter S."/>
            <person name="Seeger K."/>
            <person name="Skelton S."/>
            <person name="Squares S."/>
            <person name="Squares R."/>
            <person name="Sulston J.E."/>
            <person name="Taylor K."/>
            <person name="Whitehead S."/>
            <person name="Barrell B.G."/>
        </authorList>
    </citation>
    <scope>NUCLEOTIDE SEQUENCE [LARGE SCALE GENOMIC DNA]</scope>
    <source>
        <strain>ATCC 25618 / H37Rv</strain>
    </source>
</reference>
<reference key="2">
    <citation type="journal article" date="2005" name="Protein Expr. Purif.">
        <title>Expression and purification of a functionally active recombinant GDP-mannosyltransferase (PimA) from Mycobacterium tuberculosis H37Rv.</title>
        <authorList>
            <person name="Gu X."/>
            <person name="Chen M."/>
            <person name="Wang Q."/>
            <person name="Zhang M."/>
            <person name="Wang B."/>
            <person name="Wang H."/>
        </authorList>
    </citation>
    <scope>FUNCTION</scope>
    <scope>CATALYTIC ACTIVITY</scope>
    <scope>BIOPHYSICOCHEMICAL PROPERTIES</scope>
    <scope>COFACTOR</scope>
    <source>
        <strain>ATCC 25618 / H37Rv</strain>
    </source>
</reference>
<reference key="3">
    <citation type="journal article" date="2008" name="BMC Syst. Biol.">
        <title>targetTB: a target identification pipeline for Mycobacterium tuberculosis through an interactome, reactome and genome-scale structural analysis.</title>
        <authorList>
            <person name="Raman K."/>
            <person name="Yeturu K."/>
            <person name="Chandra N."/>
        </authorList>
    </citation>
    <scope>IDENTIFICATION AS A DRUG TARGET [LARGE SCALE ANALYSIS]</scope>
</reference>
<reference key="4">
    <citation type="journal article" date="2011" name="Mol. Cell. Proteomics">
        <title>Proteogenomic analysis of Mycobacterium tuberculosis by high resolution mass spectrometry.</title>
        <authorList>
            <person name="Kelkar D.S."/>
            <person name="Kumar D."/>
            <person name="Kumar P."/>
            <person name="Balakrishnan L."/>
            <person name="Muthusamy B."/>
            <person name="Yadav A.K."/>
            <person name="Shrivastava P."/>
            <person name="Marimuthu A."/>
            <person name="Anand S."/>
            <person name="Sundaram H."/>
            <person name="Kingsbury R."/>
            <person name="Harsha H.C."/>
            <person name="Nair B."/>
            <person name="Prasad T.S."/>
            <person name="Chauhan D.S."/>
            <person name="Katoch K."/>
            <person name="Katoch V.M."/>
            <person name="Kumar P."/>
            <person name="Chaerkady R."/>
            <person name="Ramachandran S."/>
            <person name="Dash D."/>
            <person name="Pandey A."/>
        </authorList>
    </citation>
    <scope>IDENTIFICATION BY MASS SPECTROMETRY [LARGE SCALE ANALYSIS]</scope>
    <source>
        <strain>ATCC 25618 / H37Rv</strain>
    </source>
</reference>
<reference key="5">
    <citation type="journal article" date="2014" name="J. Bacteriol.">
        <title>The phosphatidyl-myo-inositol mannosyltransferase PimA is essential for Mycobacterium tuberculosis growth in vitro and in vivo.</title>
        <authorList>
            <person name="Boldrin F."/>
            <person name="Ventura M."/>
            <person name="Degiacomi G."/>
            <person name="Ravishankar S."/>
            <person name="Sala C."/>
            <person name="Svetlikova Z."/>
            <person name="Ambady A."/>
            <person name="Dhar N."/>
            <person name="Kordulakova J."/>
            <person name="Zhang M."/>
            <person name="Serafini A."/>
            <person name="Vishwas K.G."/>
            <person name="Vishwas V.G."/>
            <person name="Kolly G.S."/>
            <person name="Kumar N."/>
            <person name="Palu G."/>
            <person name="Guerin M.E."/>
            <person name="Mikusova K."/>
            <person name="Cole S.T."/>
            <person name="Manganelli R."/>
        </authorList>
    </citation>
    <scope>FUNCTION</scope>
    <scope>DISRUPTION PHENOTYPE</scope>
    <source>
        <strain>ATCC 25618 / H37Rv</strain>
    </source>
</reference>
<dbReference type="EC" id="2.4.1.345" evidence="2"/>
<dbReference type="EMBL" id="AL123456">
    <property type="protein sequence ID" value="CCP45407.1"/>
    <property type="molecule type" value="Genomic_DNA"/>
</dbReference>
<dbReference type="PIR" id="A70571">
    <property type="entry name" value="A70571"/>
</dbReference>
<dbReference type="RefSeq" id="NP_217126.1">
    <property type="nucleotide sequence ID" value="NC_000962.3"/>
</dbReference>
<dbReference type="RefSeq" id="WP_003413478.1">
    <property type="nucleotide sequence ID" value="NZ_NVQJ01000023.1"/>
</dbReference>
<dbReference type="SMR" id="P9WMZ5"/>
<dbReference type="FunCoup" id="P9WMZ5">
    <property type="interactions" value="12"/>
</dbReference>
<dbReference type="STRING" id="83332.Rv2610c"/>
<dbReference type="PaxDb" id="83332-Rv2610c"/>
<dbReference type="DNASU" id="888627"/>
<dbReference type="GeneID" id="45426613"/>
<dbReference type="GeneID" id="888627"/>
<dbReference type="KEGG" id="mtu:Rv2610c"/>
<dbReference type="KEGG" id="mtv:RVBD_2610c"/>
<dbReference type="TubercuList" id="Rv2610c"/>
<dbReference type="eggNOG" id="COG0438">
    <property type="taxonomic scope" value="Bacteria"/>
</dbReference>
<dbReference type="InParanoid" id="P9WMZ5"/>
<dbReference type="OrthoDB" id="5240531at2"/>
<dbReference type="PhylomeDB" id="P9WMZ5"/>
<dbReference type="BRENDA" id="2.4.1.345">
    <property type="organism ID" value="3445"/>
</dbReference>
<dbReference type="UniPathway" id="UPA00949"/>
<dbReference type="Proteomes" id="UP000001584">
    <property type="component" value="Chromosome"/>
</dbReference>
<dbReference type="GO" id="GO:0005886">
    <property type="term" value="C:plasma membrane"/>
    <property type="evidence" value="ECO:0000314"/>
    <property type="project" value="MTBBASE"/>
</dbReference>
<dbReference type="GO" id="GO:0004377">
    <property type="term" value="F:GDP-Man:Man3GlcNAc2-PP-Dol alpha-1,2-mannosyltransferase activity"/>
    <property type="evidence" value="ECO:0000250"/>
    <property type="project" value="UniProtKB"/>
</dbReference>
<dbReference type="GO" id="GO:0016757">
    <property type="term" value="F:glycosyltransferase activity"/>
    <property type="evidence" value="ECO:0000318"/>
    <property type="project" value="GO_Central"/>
</dbReference>
<dbReference type="GO" id="GO:0000287">
    <property type="term" value="F:magnesium ion binding"/>
    <property type="evidence" value="ECO:0000314"/>
    <property type="project" value="MTBBASE"/>
</dbReference>
<dbReference type="GO" id="GO:0000030">
    <property type="term" value="F:mannosyltransferase activity"/>
    <property type="evidence" value="ECO:0000314"/>
    <property type="project" value="MTBBASE"/>
</dbReference>
<dbReference type="GO" id="GO:0043750">
    <property type="term" value="F:phosphatidylinositol alpha-mannosyltransferase activity"/>
    <property type="evidence" value="ECO:0000314"/>
    <property type="project" value="MTBBASE"/>
</dbReference>
<dbReference type="GO" id="GO:0009247">
    <property type="term" value="P:glycolipid biosynthetic process"/>
    <property type="evidence" value="ECO:0000314"/>
    <property type="project" value="MTBBASE"/>
</dbReference>
<dbReference type="GO" id="GO:0046488">
    <property type="term" value="P:phosphatidylinositol metabolic process"/>
    <property type="evidence" value="ECO:0000250"/>
    <property type="project" value="UniProtKB"/>
</dbReference>
<dbReference type="GO" id="GO:0008654">
    <property type="term" value="P:phospholipid biosynthetic process"/>
    <property type="evidence" value="ECO:0007669"/>
    <property type="project" value="UniProtKB-KW"/>
</dbReference>
<dbReference type="CDD" id="cd03801">
    <property type="entry name" value="GT4_PimA-like"/>
    <property type="match status" value="1"/>
</dbReference>
<dbReference type="FunFam" id="3.40.50.2000:FF:000207">
    <property type="entry name" value="Phosphatidyl-myo-inositol mannosyltransferase"/>
    <property type="match status" value="1"/>
</dbReference>
<dbReference type="Gene3D" id="3.40.50.2000">
    <property type="entry name" value="Glycogen Phosphorylase B"/>
    <property type="match status" value="2"/>
</dbReference>
<dbReference type="InterPro" id="IPR028098">
    <property type="entry name" value="Glyco_trans_4-like_N"/>
</dbReference>
<dbReference type="InterPro" id="IPR050194">
    <property type="entry name" value="Glycosyltransferase_grp1"/>
</dbReference>
<dbReference type="PANTHER" id="PTHR45947">
    <property type="entry name" value="SULFOQUINOVOSYL TRANSFERASE SQD2"/>
    <property type="match status" value="1"/>
</dbReference>
<dbReference type="PANTHER" id="PTHR45947:SF3">
    <property type="entry name" value="SULFOQUINOVOSYL TRANSFERASE SQD2"/>
    <property type="match status" value="1"/>
</dbReference>
<dbReference type="Pfam" id="PF13692">
    <property type="entry name" value="Glyco_trans_1_4"/>
    <property type="match status" value="1"/>
</dbReference>
<dbReference type="Pfam" id="PF13439">
    <property type="entry name" value="Glyco_transf_4"/>
    <property type="match status" value="1"/>
</dbReference>
<dbReference type="SUPFAM" id="SSF53756">
    <property type="entry name" value="UDP-Glycosyltransferase/glycogen phosphorylase"/>
    <property type="match status" value="1"/>
</dbReference>
<gene>
    <name evidence="5" type="primary">pimA</name>
    <name type="ordered locus">Rv2610c</name>
    <name type="ORF">MTCY01A10.23</name>
</gene>
<organism>
    <name type="scientific">Mycobacterium tuberculosis (strain ATCC 25618 / H37Rv)</name>
    <dbReference type="NCBI Taxonomy" id="83332"/>
    <lineage>
        <taxon>Bacteria</taxon>
        <taxon>Bacillati</taxon>
        <taxon>Actinomycetota</taxon>
        <taxon>Actinomycetes</taxon>
        <taxon>Mycobacteriales</taxon>
        <taxon>Mycobacteriaceae</taxon>
        <taxon>Mycobacterium</taxon>
        <taxon>Mycobacterium tuberculosis complex</taxon>
    </lineage>
</organism>
<feature type="chain" id="PRO_0000080302" description="Phosphatidyl-myo-inositol mannosyltransferase">
    <location>
        <begin position="1"/>
        <end position="378"/>
    </location>
</feature>
<feature type="binding site" evidence="1">
    <location>
        <position position="9"/>
    </location>
    <ligand>
        <name>GDP-alpha-D-mannose</name>
        <dbReference type="ChEBI" id="CHEBI:57527"/>
    </ligand>
</feature>
<feature type="binding site" evidence="1">
    <location>
        <position position="16"/>
    </location>
    <ligand>
        <name>GDP-alpha-D-mannose</name>
        <dbReference type="ChEBI" id="CHEBI:57527"/>
    </ligand>
</feature>
<feature type="binding site" evidence="1">
    <location>
        <position position="18"/>
    </location>
    <ligand>
        <name>a 1,2-diacyl-sn-glycero-3-phospho-(1D-myo-inositol)</name>
        <dbReference type="ChEBI" id="CHEBI:57880"/>
    </ligand>
</feature>
<feature type="binding site" evidence="1">
    <location>
        <begin position="62"/>
        <end position="63"/>
    </location>
    <ligand>
        <name>a 1,2-diacyl-sn-glycero-3-phospho-(1D-myo-inositol)</name>
        <dbReference type="ChEBI" id="CHEBI:57880"/>
    </ligand>
</feature>
<feature type="binding site" evidence="1">
    <location>
        <position position="68"/>
    </location>
    <ligand>
        <name>a 1,2-diacyl-sn-glycero-3-phospho-(1D-myo-inositol)</name>
        <dbReference type="ChEBI" id="CHEBI:57880"/>
    </ligand>
</feature>
<feature type="binding site" evidence="1">
    <location>
        <position position="196"/>
    </location>
    <ligand>
        <name>GDP-alpha-D-mannose</name>
        <dbReference type="ChEBI" id="CHEBI:57527"/>
    </ligand>
</feature>
<feature type="binding site" evidence="1">
    <location>
        <begin position="201"/>
        <end position="202"/>
    </location>
    <ligand>
        <name>GDP-alpha-D-mannose</name>
        <dbReference type="ChEBI" id="CHEBI:57527"/>
    </ligand>
</feature>
<feature type="binding site" evidence="1">
    <location>
        <begin position="251"/>
        <end position="253"/>
    </location>
    <ligand>
        <name>GDP-alpha-D-mannose</name>
        <dbReference type="ChEBI" id="CHEBI:57527"/>
    </ligand>
</feature>
<feature type="binding site" evidence="1">
    <location>
        <position position="256"/>
    </location>
    <ligand>
        <name>GDP-alpha-D-mannose</name>
        <dbReference type="ChEBI" id="CHEBI:57527"/>
    </ligand>
</feature>
<feature type="binding site" evidence="1">
    <location>
        <begin position="274"/>
        <end position="278"/>
    </location>
    <ligand>
        <name>GDP-alpha-D-mannose</name>
        <dbReference type="ChEBI" id="CHEBI:57527"/>
    </ligand>
</feature>
<feature type="binding site" evidence="1">
    <location>
        <position position="282"/>
    </location>
    <ligand>
        <name>GDP-alpha-D-mannose</name>
        <dbReference type="ChEBI" id="CHEBI:57527"/>
    </ligand>
</feature>
<feature type="site" description="Important for catalytic activity" evidence="1">
    <location>
        <position position="118"/>
    </location>
</feature>
<sequence>MRIGMICPYSFDVPGGVQSHVLQLAEVMRTRGHLVSVLAPASPHAALPDYFVSGGRAVPIPYNGSVARLRFGPATHRKVKKWLAHGDFDVLHLHEPNAPSLSMLALNIAEGPIVATFHTSTTKSLTLTVFQGILRPMHEKIVGRIAVSDLARRWQMEALGSDAVEIPNGVDVDSFASAARLDGYPRQGKTVLFLGRYDEPRKGMAVLLDALPKVVQRFPDVQLLIVGHGDADQLRGQAGRLAAHLRFLGQVDDAGKASAMRSADVYCAPNTGGESFGIVLVEAMAAGTAVVASDLDAFRRVLRDGEVGHLVPVDPPDLQAAALADGLIAVLENDVLRERYVAAGNAAVRRYDWSVVASQIMRVYETVAGSGAKVQVAS</sequence>
<protein>
    <recommendedName>
        <fullName evidence="5">Phosphatidyl-myo-inositol mannosyltransferase</fullName>
        <ecNumber evidence="2">2.4.1.345</ecNumber>
    </recommendedName>
    <alternativeName>
        <fullName evidence="5">Alpha-mannosyltransferase</fullName>
    </alternativeName>
    <alternativeName>
        <fullName evidence="5">GDP-mannose-dependent alpha-(1-2)-phosphatidylinositol mannosyltransferase</fullName>
    </alternativeName>
    <alternativeName>
        <fullName evidence="6">Guanosine diphosphomannose-phosphatidyl-inositol alpha-mannosyltransferase</fullName>
    </alternativeName>
    <alternativeName>
        <fullName evidence="5">Phosphatidylinositol alpha-mannosyltransferase</fullName>
        <shortName evidence="5">PI alpha-mannosyltransferase</shortName>
    </alternativeName>
</protein>
<comment type="function">
    <text evidence="2 4">Involved in the biosynthesis of phosphatidyl-myo-inositol mannosides (PIM) which are early precursors in the biosynthesis of lipomannans (LM) and lipoarabinomannans (LAM). Catalyzes the addition of a mannosyl residue from GDP-D-mannose (GDP-Man) to the position 2 of the carrier lipid phosphatidyl-myo-inositol (PI) to generate a phosphatidyl-myo-inositol bearing an alpha-1,2-linked mannose residue (PIM1) (PubMed:15939292). PimA plays an essential role for growth in macrophages and during both the acute and chronic phases of infection (PubMed:25049093).</text>
</comment>
<comment type="catalytic activity">
    <reaction evidence="2">
        <text>a 1,2-diacyl-sn-glycero-3-phospho-(1D-myo-inositol) + GDP-alpha-D-mannose = a 1,2-diacyl-sn-glycero-3-phospho-[alpha-D-mannopyranosyl-(1&lt;-&gt;6)-D-myo-inositol] + GDP + H(+)</text>
        <dbReference type="Rhea" id="RHEA:47368"/>
        <dbReference type="ChEBI" id="CHEBI:15378"/>
        <dbReference type="ChEBI" id="CHEBI:57527"/>
        <dbReference type="ChEBI" id="CHEBI:57880"/>
        <dbReference type="ChEBI" id="CHEBI:58189"/>
        <dbReference type="ChEBI" id="CHEBI:87673"/>
        <dbReference type="EC" id="2.4.1.345"/>
    </reaction>
</comment>
<comment type="cofactor">
    <cofactor evidence="2">
        <name>Mg(2+)</name>
        <dbReference type="ChEBI" id="CHEBI:18420"/>
    </cofactor>
</comment>
<comment type="biophysicochemical properties">
    <kinetics>
        <KM evidence="2">18 uM for mannose</KM>
        <Vmax evidence="2">0.05 nmol/min/ug enzyme</Vmax>
    </kinetics>
    <phDependence>
        <text evidence="2">Optimum pH is about 7.</text>
    </phDependence>
</comment>
<comment type="pathway">
    <text evidence="7">Phospholipid metabolism; phosphatidylinositol metabolism.</text>
</comment>
<comment type="subunit">
    <text evidence="1">Monomer.</text>
</comment>
<comment type="subcellular location">
    <subcellularLocation>
        <location evidence="1">Cell membrane</location>
        <topology evidence="1">Peripheral membrane protein</topology>
        <orientation evidence="1">Cytoplasmic side</orientation>
    </subcellularLocation>
</comment>
<comment type="disruption phenotype">
    <text evidence="4">Cells lacking this gene are unable to produce PIM and show an increase of phosphatidyl-myo-inositol (PI).</text>
</comment>
<comment type="miscellaneous">
    <text evidence="3">Was identified as a high-confidence drug target.</text>
</comment>
<comment type="similarity">
    <text evidence="6">Belongs to the glycosyltransferase group 1 family. Glycosyltransferase 4 subfamily.</text>
</comment>
<proteinExistence type="evidence at protein level"/>
<keyword id="KW-1003">Cell membrane</keyword>
<keyword id="KW-0328">Glycosyltransferase</keyword>
<keyword id="KW-0444">Lipid biosynthesis</keyword>
<keyword id="KW-0443">Lipid metabolism</keyword>
<keyword id="KW-0460">Magnesium</keyword>
<keyword id="KW-0472">Membrane</keyword>
<keyword id="KW-0594">Phospholipid biosynthesis</keyword>
<keyword id="KW-1208">Phospholipid metabolism</keyword>
<keyword id="KW-1185">Reference proteome</keyword>
<keyword id="KW-0808">Transferase</keyword>
<keyword id="KW-0843">Virulence</keyword>
<accession>P9WMZ5</accession>
<accession>L0TD24</accession>
<accession>O06204</accession>
<accession>Q8VJF2</accession>
<evidence type="ECO:0000250" key="1">
    <source>
        <dbReference type="UniProtKB" id="A0QWG6"/>
    </source>
</evidence>
<evidence type="ECO:0000269" key="2">
    <source>
    </source>
</evidence>
<evidence type="ECO:0000269" key="3">
    <source>
    </source>
</evidence>
<evidence type="ECO:0000269" key="4">
    <source>
    </source>
</evidence>
<evidence type="ECO:0000303" key="5">
    <source>
    </source>
</evidence>
<evidence type="ECO:0000305" key="6"/>
<evidence type="ECO:0000305" key="7">
    <source>
    </source>
</evidence>
<name>PIMA_MYCTU</name>